<accession>B2HQI2</accession>
<name>CLPS_MYCMM</name>
<reference key="1">
    <citation type="journal article" date="2008" name="Genome Res.">
        <title>Insights from the complete genome sequence of Mycobacterium marinum on the evolution of Mycobacterium tuberculosis.</title>
        <authorList>
            <person name="Stinear T.P."/>
            <person name="Seemann T."/>
            <person name="Harrison P.F."/>
            <person name="Jenkin G.A."/>
            <person name="Davies J.K."/>
            <person name="Johnson P.D."/>
            <person name="Abdellah Z."/>
            <person name="Arrowsmith C."/>
            <person name="Chillingworth T."/>
            <person name="Churcher C."/>
            <person name="Clarke K."/>
            <person name="Cronin A."/>
            <person name="Davis P."/>
            <person name="Goodhead I."/>
            <person name="Holroyd N."/>
            <person name="Jagels K."/>
            <person name="Lord A."/>
            <person name="Moule S."/>
            <person name="Mungall K."/>
            <person name="Norbertczak H."/>
            <person name="Quail M.A."/>
            <person name="Rabbinowitsch E."/>
            <person name="Walker D."/>
            <person name="White B."/>
            <person name="Whitehead S."/>
            <person name="Small P.L."/>
            <person name="Brosch R."/>
            <person name="Ramakrishnan L."/>
            <person name="Fischbach M.A."/>
            <person name="Parkhill J."/>
            <person name="Cole S.T."/>
        </authorList>
    </citation>
    <scope>NUCLEOTIDE SEQUENCE [LARGE SCALE GENOMIC DNA]</scope>
    <source>
        <strain>ATCC BAA-535 / M</strain>
    </source>
</reference>
<organism>
    <name type="scientific">Mycobacterium marinum (strain ATCC BAA-535 / M)</name>
    <dbReference type="NCBI Taxonomy" id="216594"/>
    <lineage>
        <taxon>Bacteria</taxon>
        <taxon>Bacillati</taxon>
        <taxon>Actinomycetota</taxon>
        <taxon>Actinomycetes</taxon>
        <taxon>Mycobacteriales</taxon>
        <taxon>Mycobacteriaceae</taxon>
        <taxon>Mycobacterium</taxon>
        <taxon>Mycobacterium ulcerans group</taxon>
    </lineage>
</organism>
<sequence length="101" mass="11006">MVVASAPAKPGSVGQQESASRDATASPWVTIVWDDPVNLMTYVTYVFQKLFGYSEPHATKLMLQVHNEGRAVVSAGSREAMEVDVSKLHAAGLWATMQQDR</sequence>
<protein>
    <recommendedName>
        <fullName evidence="1">ATP-dependent Clp protease adapter protein ClpS</fullName>
    </recommendedName>
</protein>
<dbReference type="EMBL" id="CP000854">
    <property type="protein sequence ID" value="ACC42474.1"/>
    <property type="molecule type" value="Genomic_DNA"/>
</dbReference>
<dbReference type="RefSeq" id="WP_012395653.1">
    <property type="nucleotide sequence ID" value="NC_010612.1"/>
</dbReference>
<dbReference type="SMR" id="B2HQI2"/>
<dbReference type="STRING" id="216594.MMAR_4067"/>
<dbReference type="GeneID" id="34341485"/>
<dbReference type="GeneID" id="93438280"/>
<dbReference type="KEGG" id="mmi:MMAR_4067"/>
<dbReference type="eggNOG" id="COG2127">
    <property type="taxonomic scope" value="Bacteria"/>
</dbReference>
<dbReference type="HOGENOM" id="CLU_153743_0_0_11"/>
<dbReference type="OrthoDB" id="162238at2"/>
<dbReference type="Proteomes" id="UP000001190">
    <property type="component" value="Chromosome"/>
</dbReference>
<dbReference type="GO" id="GO:0030163">
    <property type="term" value="P:protein catabolic process"/>
    <property type="evidence" value="ECO:0007669"/>
    <property type="project" value="InterPro"/>
</dbReference>
<dbReference type="GO" id="GO:0006508">
    <property type="term" value="P:proteolysis"/>
    <property type="evidence" value="ECO:0007669"/>
    <property type="project" value="UniProtKB-UniRule"/>
</dbReference>
<dbReference type="Gene3D" id="3.30.1390.10">
    <property type="match status" value="1"/>
</dbReference>
<dbReference type="HAMAP" id="MF_00302">
    <property type="entry name" value="ClpS"/>
    <property type="match status" value="1"/>
</dbReference>
<dbReference type="InterPro" id="IPR022935">
    <property type="entry name" value="ClpS"/>
</dbReference>
<dbReference type="InterPro" id="IPR003769">
    <property type="entry name" value="ClpS_core"/>
</dbReference>
<dbReference type="InterPro" id="IPR014719">
    <property type="entry name" value="Ribosomal_bL12_C/ClpS-like"/>
</dbReference>
<dbReference type="NCBIfam" id="NF000668">
    <property type="entry name" value="PRK00033.1-1"/>
    <property type="match status" value="1"/>
</dbReference>
<dbReference type="PANTHER" id="PTHR33473:SF19">
    <property type="entry name" value="ATP-DEPENDENT CLP PROTEASE ADAPTER PROTEIN CLPS"/>
    <property type="match status" value="1"/>
</dbReference>
<dbReference type="PANTHER" id="PTHR33473">
    <property type="entry name" value="ATP-DEPENDENT CLP PROTEASE ADAPTER PROTEIN CLPS1, CHLOROPLASTIC"/>
    <property type="match status" value="1"/>
</dbReference>
<dbReference type="Pfam" id="PF02617">
    <property type="entry name" value="ClpS"/>
    <property type="match status" value="1"/>
</dbReference>
<dbReference type="SUPFAM" id="SSF54736">
    <property type="entry name" value="ClpS-like"/>
    <property type="match status" value="1"/>
</dbReference>
<gene>
    <name evidence="1" type="primary">clpS</name>
    <name type="ordered locus">MMAR_4067</name>
</gene>
<evidence type="ECO:0000255" key="1">
    <source>
        <dbReference type="HAMAP-Rule" id="MF_00302"/>
    </source>
</evidence>
<evidence type="ECO:0000256" key="2">
    <source>
        <dbReference type="SAM" id="MobiDB-lite"/>
    </source>
</evidence>
<proteinExistence type="inferred from homology"/>
<feature type="chain" id="PRO_1000115464" description="ATP-dependent Clp protease adapter protein ClpS">
    <location>
        <begin position="1"/>
        <end position="101"/>
    </location>
</feature>
<feature type="region of interest" description="Disordered" evidence="2">
    <location>
        <begin position="1"/>
        <end position="24"/>
    </location>
</feature>
<feature type="compositionally biased region" description="Polar residues" evidence="2">
    <location>
        <begin position="13"/>
        <end position="23"/>
    </location>
</feature>
<comment type="function">
    <text evidence="1">Involved in the modulation of the specificity of the ClpAP-mediated ATP-dependent protein degradation.</text>
</comment>
<comment type="subunit">
    <text evidence="1">Binds to the N-terminal domain of the chaperone ClpA.</text>
</comment>
<comment type="similarity">
    <text evidence="1">Belongs to the ClpS family.</text>
</comment>
<keyword id="KW-1185">Reference proteome</keyword>